<organism>
    <name type="scientific">Mycoplasmopsis synoviae (strain 53)</name>
    <name type="common">Mycoplasma synoviae</name>
    <dbReference type="NCBI Taxonomy" id="262723"/>
    <lineage>
        <taxon>Bacteria</taxon>
        <taxon>Bacillati</taxon>
        <taxon>Mycoplasmatota</taxon>
        <taxon>Mycoplasmoidales</taxon>
        <taxon>Metamycoplasmataceae</taxon>
        <taxon>Mycoplasmopsis</taxon>
    </lineage>
</organism>
<name>PTH_MYCS5</name>
<keyword id="KW-0963">Cytoplasm</keyword>
<keyword id="KW-0378">Hydrolase</keyword>
<keyword id="KW-1185">Reference proteome</keyword>
<keyword id="KW-0694">RNA-binding</keyword>
<keyword id="KW-0820">tRNA-binding</keyword>
<gene>
    <name evidence="1" type="primary">pth</name>
    <name type="ordered locus">MS53_0616</name>
</gene>
<accession>Q4A5E8</accession>
<proteinExistence type="inferred from homology"/>
<protein>
    <recommendedName>
        <fullName evidence="1">Peptidyl-tRNA hydrolase</fullName>
        <shortName evidence="1">Pth</shortName>
        <ecNumber evidence="1">3.1.1.29</ecNumber>
    </recommendedName>
</protein>
<sequence>MKLIVGLGNPGDKYKFTRHNVGFLVIDLICQKLKITLDKEKTHGSYAKFEDFIIAKPNTYMNLSGNFVLELANFFKIAPDDILVIHDEKDFELGKSAIKIGGSGGSHNGVLDVINKLNTQNFKRLKIGIGQNQEMALKDYVLQRFSLEEFSVLEPVLNQAADVCIQYSFNDIHYLMNKYNQKKKNGN</sequence>
<dbReference type="EC" id="3.1.1.29" evidence="1"/>
<dbReference type="EMBL" id="AE017245">
    <property type="protein sequence ID" value="AAZ44023.1"/>
    <property type="molecule type" value="Genomic_DNA"/>
</dbReference>
<dbReference type="RefSeq" id="WP_011283752.1">
    <property type="nucleotide sequence ID" value="NC_007294.1"/>
</dbReference>
<dbReference type="SMR" id="Q4A5E8"/>
<dbReference type="STRING" id="262723.MS53_0616"/>
<dbReference type="KEGG" id="msy:MS53_0616"/>
<dbReference type="eggNOG" id="COG0193">
    <property type="taxonomic scope" value="Bacteria"/>
</dbReference>
<dbReference type="HOGENOM" id="CLU_062456_4_1_14"/>
<dbReference type="OrthoDB" id="9800507at2"/>
<dbReference type="Proteomes" id="UP000000549">
    <property type="component" value="Chromosome"/>
</dbReference>
<dbReference type="GO" id="GO:0005737">
    <property type="term" value="C:cytoplasm"/>
    <property type="evidence" value="ECO:0007669"/>
    <property type="project" value="UniProtKB-SubCell"/>
</dbReference>
<dbReference type="GO" id="GO:0004045">
    <property type="term" value="F:peptidyl-tRNA hydrolase activity"/>
    <property type="evidence" value="ECO:0007669"/>
    <property type="project" value="UniProtKB-UniRule"/>
</dbReference>
<dbReference type="GO" id="GO:0000049">
    <property type="term" value="F:tRNA binding"/>
    <property type="evidence" value="ECO:0007669"/>
    <property type="project" value="UniProtKB-UniRule"/>
</dbReference>
<dbReference type="GO" id="GO:0006515">
    <property type="term" value="P:protein quality control for misfolded or incompletely synthesized proteins"/>
    <property type="evidence" value="ECO:0007669"/>
    <property type="project" value="UniProtKB-UniRule"/>
</dbReference>
<dbReference type="GO" id="GO:0072344">
    <property type="term" value="P:rescue of stalled ribosome"/>
    <property type="evidence" value="ECO:0007669"/>
    <property type="project" value="UniProtKB-UniRule"/>
</dbReference>
<dbReference type="CDD" id="cd00462">
    <property type="entry name" value="PTH"/>
    <property type="match status" value="1"/>
</dbReference>
<dbReference type="FunFam" id="3.40.50.1470:FF:000001">
    <property type="entry name" value="Peptidyl-tRNA hydrolase"/>
    <property type="match status" value="1"/>
</dbReference>
<dbReference type="Gene3D" id="3.40.50.1470">
    <property type="entry name" value="Peptidyl-tRNA hydrolase"/>
    <property type="match status" value="1"/>
</dbReference>
<dbReference type="HAMAP" id="MF_00083">
    <property type="entry name" value="Pept_tRNA_hydro_bact"/>
    <property type="match status" value="1"/>
</dbReference>
<dbReference type="InterPro" id="IPR001328">
    <property type="entry name" value="Pept_tRNA_hydro"/>
</dbReference>
<dbReference type="InterPro" id="IPR018171">
    <property type="entry name" value="Pept_tRNA_hydro_CS"/>
</dbReference>
<dbReference type="InterPro" id="IPR036416">
    <property type="entry name" value="Pept_tRNA_hydro_sf"/>
</dbReference>
<dbReference type="NCBIfam" id="TIGR00447">
    <property type="entry name" value="pth"/>
    <property type="match status" value="1"/>
</dbReference>
<dbReference type="PANTHER" id="PTHR17224">
    <property type="entry name" value="PEPTIDYL-TRNA HYDROLASE"/>
    <property type="match status" value="1"/>
</dbReference>
<dbReference type="PANTHER" id="PTHR17224:SF1">
    <property type="entry name" value="PEPTIDYL-TRNA HYDROLASE"/>
    <property type="match status" value="1"/>
</dbReference>
<dbReference type="Pfam" id="PF01195">
    <property type="entry name" value="Pept_tRNA_hydro"/>
    <property type="match status" value="1"/>
</dbReference>
<dbReference type="SUPFAM" id="SSF53178">
    <property type="entry name" value="Peptidyl-tRNA hydrolase-like"/>
    <property type="match status" value="1"/>
</dbReference>
<dbReference type="PROSITE" id="PS01195">
    <property type="entry name" value="PEPT_TRNA_HYDROL_1"/>
    <property type="match status" value="1"/>
</dbReference>
<comment type="function">
    <text evidence="1">Hydrolyzes ribosome-free peptidyl-tRNAs (with 1 or more amino acids incorporated), which drop off the ribosome during protein synthesis, or as a result of ribosome stalling.</text>
</comment>
<comment type="function">
    <text evidence="1">Catalyzes the release of premature peptidyl moieties from peptidyl-tRNA molecules trapped in stalled 50S ribosomal subunits, and thus maintains levels of free tRNAs and 50S ribosomes.</text>
</comment>
<comment type="catalytic activity">
    <reaction evidence="1">
        <text>an N-acyl-L-alpha-aminoacyl-tRNA + H2O = an N-acyl-L-amino acid + a tRNA + H(+)</text>
        <dbReference type="Rhea" id="RHEA:54448"/>
        <dbReference type="Rhea" id="RHEA-COMP:10123"/>
        <dbReference type="Rhea" id="RHEA-COMP:13883"/>
        <dbReference type="ChEBI" id="CHEBI:15377"/>
        <dbReference type="ChEBI" id="CHEBI:15378"/>
        <dbReference type="ChEBI" id="CHEBI:59874"/>
        <dbReference type="ChEBI" id="CHEBI:78442"/>
        <dbReference type="ChEBI" id="CHEBI:138191"/>
        <dbReference type="EC" id="3.1.1.29"/>
    </reaction>
</comment>
<comment type="subunit">
    <text evidence="1">Monomer.</text>
</comment>
<comment type="subcellular location">
    <subcellularLocation>
        <location evidence="1">Cytoplasm</location>
    </subcellularLocation>
</comment>
<comment type="similarity">
    <text evidence="1">Belongs to the PTH family.</text>
</comment>
<evidence type="ECO:0000255" key="1">
    <source>
        <dbReference type="HAMAP-Rule" id="MF_00083"/>
    </source>
</evidence>
<reference key="1">
    <citation type="journal article" date="2005" name="J. Bacteriol.">
        <title>Swine and poultry pathogens: the complete genome sequences of two strains of Mycoplasma hyopneumoniae and a strain of Mycoplasma synoviae.</title>
        <authorList>
            <person name="Vasconcelos A.T.R."/>
            <person name="Ferreira H.B."/>
            <person name="Bizarro C.V."/>
            <person name="Bonatto S.L."/>
            <person name="Carvalho M.O."/>
            <person name="Pinto P.M."/>
            <person name="Almeida D.F."/>
            <person name="Almeida L.G.P."/>
            <person name="Almeida R."/>
            <person name="Alves-Junior L."/>
            <person name="Assuncao E.N."/>
            <person name="Azevedo V.A.C."/>
            <person name="Bogo M.R."/>
            <person name="Brigido M.M."/>
            <person name="Brocchi M."/>
            <person name="Burity H.A."/>
            <person name="Camargo A.A."/>
            <person name="Camargo S.S."/>
            <person name="Carepo M.S."/>
            <person name="Carraro D.M."/>
            <person name="de Mattos Cascardo J.C."/>
            <person name="Castro L.A."/>
            <person name="Cavalcanti G."/>
            <person name="Chemale G."/>
            <person name="Collevatti R.G."/>
            <person name="Cunha C.W."/>
            <person name="Dallagiovanna B."/>
            <person name="Dambros B.P."/>
            <person name="Dellagostin O.A."/>
            <person name="Falcao C."/>
            <person name="Fantinatti-Garboggini F."/>
            <person name="Felipe M.S.S."/>
            <person name="Fiorentin L."/>
            <person name="Franco G.R."/>
            <person name="Freitas N.S.A."/>
            <person name="Frias D."/>
            <person name="Grangeiro T.B."/>
            <person name="Grisard E.C."/>
            <person name="Guimaraes C.T."/>
            <person name="Hungria M."/>
            <person name="Jardim S.N."/>
            <person name="Krieger M.A."/>
            <person name="Laurino J.P."/>
            <person name="Lima L.F.A."/>
            <person name="Lopes M.I."/>
            <person name="Loreto E.L.S."/>
            <person name="Madeira H.M.F."/>
            <person name="Manfio G.P."/>
            <person name="Maranhao A.Q."/>
            <person name="Martinkovics C.T."/>
            <person name="Medeiros S.R.B."/>
            <person name="Moreira M.A.M."/>
            <person name="Neiva M."/>
            <person name="Ramalho-Neto C.E."/>
            <person name="Nicolas M.F."/>
            <person name="Oliveira S.C."/>
            <person name="Paixao R.F.C."/>
            <person name="Pedrosa F.O."/>
            <person name="Pena S.D.J."/>
            <person name="Pereira M."/>
            <person name="Pereira-Ferrari L."/>
            <person name="Piffer I."/>
            <person name="Pinto L.S."/>
            <person name="Potrich D.P."/>
            <person name="Salim A.C.M."/>
            <person name="Santos F.R."/>
            <person name="Schmitt R."/>
            <person name="Schneider M.P.C."/>
            <person name="Schrank A."/>
            <person name="Schrank I.S."/>
            <person name="Schuck A.F."/>
            <person name="Seuanez H.N."/>
            <person name="Silva D.W."/>
            <person name="Silva R."/>
            <person name="Silva S.C."/>
            <person name="Soares C.M.A."/>
            <person name="Souza K.R.L."/>
            <person name="Souza R.C."/>
            <person name="Staats C.C."/>
            <person name="Steffens M.B.R."/>
            <person name="Teixeira S.M.R."/>
            <person name="Urmenyi T.P."/>
            <person name="Vainstein M.H."/>
            <person name="Zuccherato L.W."/>
            <person name="Simpson A.J.G."/>
            <person name="Zaha A."/>
        </authorList>
    </citation>
    <scope>NUCLEOTIDE SEQUENCE [LARGE SCALE GENOMIC DNA]</scope>
    <source>
        <strain>53</strain>
    </source>
</reference>
<feature type="chain" id="PRO_0000264063" description="Peptidyl-tRNA hydrolase">
    <location>
        <begin position="1"/>
        <end position="187"/>
    </location>
</feature>
<feature type="active site" description="Proton acceptor" evidence="1">
    <location>
        <position position="19"/>
    </location>
</feature>
<feature type="binding site" evidence="1">
    <location>
        <position position="14"/>
    </location>
    <ligand>
        <name>tRNA</name>
        <dbReference type="ChEBI" id="CHEBI:17843"/>
    </ligand>
</feature>
<feature type="binding site" evidence="1">
    <location>
        <position position="60"/>
    </location>
    <ligand>
        <name>tRNA</name>
        <dbReference type="ChEBI" id="CHEBI:17843"/>
    </ligand>
</feature>
<feature type="binding site" evidence="1">
    <location>
        <position position="62"/>
    </location>
    <ligand>
        <name>tRNA</name>
        <dbReference type="ChEBI" id="CHEBI:17843"/>
    </ligand>
</feature>
<feature type="binding site" evidence="1">
    <location>
        <position position="108"/>
    </location>
    <ligand>
        <name>tRNA</name>
        <dbReference type="ChEBI" id="CHEBI:17843"/>
    </ligand>
</feature>
<feature type="site" description="Discriminates between blocked and unblocked aminoacyl-tRNA" evidence="1">
    <location>
        <position position="9"/>
    </location>
</feature>
<feature type="site" description="Stabilizes the basic form of H active site to accept a proton" evidence="1">
    <location>
        <position position="87"/>
    </location>
</feature>